<name>PSBJ_GRATL</name>
<accession>Q6B8K7</accession>
<dbReference type="EMBL" id="AY673996">
    <property type="protein sequence ID" value="AAT79778.1"/>
    <property type="molecule type" value="Genomic_DNA"/>
</dbReference>
<dbReference type="RefSeq" id="YP_063703.1">
    <property type="nucleotide sequence ID" value="NC_006137.1"/>
</dbReference>
<dbReference type="SMR" id="Q6B8K7"/>
<dbReference type="GeneID" id="2943972"/>
<dbReference type="GO" id="GO:0009535">
    <property type="term" value="C:chloroplast thylakoid membrane"/>
    <property type="evidence" value="ECO:0007669"/>
    <property type="project" value="UniProtKB-SubCell"/>
</dbReference>
<dbReference type="GO" id="GO:0009539">
    <property type="term" value="C:photosystem II reaction center"/>
    <property type="evidence" value="ECO:0007669"/>
    <property type="project" value="InterPro"/>
</dbReference>
<dbReference type="GO" id="GO:0015979">
    <property type="term" value="P:photosynthesis"/>
    <property type="evidence" value="ECO:0007669"/>
    <property type="project" value="UniProtKB-UniRule"/>
</dbReference>
<dbReference type="Gene3D" id="6.10.250.2070">
    <property type="match status" value="1"/>
</dbReference>
<dbReference type="HAMAP" id="MF_01305">
    <property type="entry name" value="PSII_PsbJ"/>
    <property type="match status" value="1"/>
</dbReference>
<dbReference type="InterPro" id="IPR002682">
    <property type="entry name" value="PSII_PsbJ"/>
</dbReference>
<dbReference type="InterPro" id="IPR037267">
    <property type="entry name" value="PSII_PsbJ_sf"/>
</dbReference>
<dbReference type="NCBIfam" id="NF002722">
    <property type="entry name" value="PRK02565.1"/>
    <property type="match status" value="1"/>
</dbReference>
<dbReference type="PANTHER" id="PTHR34812">
    <property type="entry name" value="PHOTOSYSTEM II REACTION CENTER PROTEIN J"/>
    <property type="match status" value="1"/>
</dbReference>
<dbReference type="PANTHER" id="PTHR34812:SF3">
    <property type="entry name" value="PHOTOSYSTEM II REACTION CENTER PROTEIN J"/>
    <property type="match status" value="1"/>
</dbReference>
<dbReference type="Pfam" id="PF01788">
    <property type="entry name" value="PsbJ"/>
    <property type="match status" value="1"/>
</dbReference>
<dbReference type="SUPFAM" id="SSF161021">
    <property type="entry name" value="Photosystem II reaction center protein J, PsbJ"/>
    <property type="match status" value="1"/>
</dbReference>
<sequence length="39" mass="3898">MAGTGRVPLWLVATVGGIAVITVLGIFIYGSYSGIGSSL</sequence>
<protein>
    <recommendedName>
        <fullName evidence="1">Photosystem II reaction center protein J</fullName>
        <shortName evidence="1">PSII-J</shortName>
    </recommendedName>
</protein>
<geneLocation type="chloroplast"/>
<feature type="chain" id="PRO_0000216591" description="Photosystem II reaction center protein J">
    <location>
        <begin position="1"/>
        <end position="39"/>
    </location>
</feature>
<feature type="transmembrane region" description="Helical" evidence="1">
    <location>
        <begin position="9"/>
        <end position="29"/>
    </location>
</feature>
<comment type="function">
    <text evidence="1">One of the components of the core complex of photosystem II (PSII). PSII is a light-driven water:plastoquinone oxidoreductase that uses light energy to abstract electrons from H(2)O, generating O(2) and a proton gradient subsequently used for ATP formation. It consists of a core antenna complex that captures photons, and an electron transfer chain that converts photonic excitation into a charge separation.</text>
</comment>
<comment type="subunit">
    <text evidence="1">PSII is composed of 1 copy each of membrane proteins PsbA, PsbB, PsbC, PsbD, PsbE, PsbF, PsbH, PsbI, PsbJ, PsbK, PsbL, PsbM, PsbT, PsbX, PsbY, PsbZ, Psb30/Ycf12, at least 3 peripheral proteins of the oxygen-evolving complex and a large number of cofactors. It forms dimeric complexes.</text>
</comment>
<comment type="subcellular location">
    <subcellularLocation>
        <location evidence="1">Plastid</location>
        <location evidence="1">Chloroplast thylakoid membrane</location>
        <topology evidence="1">Single-pass membrane protein</topology>
    </subcellularLocation>
</comment>
<comment type="similarity">
    <text evidence="1">Belongs to the PsbJ family.</text>
</comment>
<organism>
    <name type="scientific">Gracilaria tenuistipitata var. liui</name>
    <name type="common">Red alga</name>
    <dbReference type="NCBI Taxonomy" id="285951"/>
    <lineage>
        <taxon>Eukaryota</taxon>
        <taxon>Rhodophyta</taxon>
        <taxon>Florideophyceae</taxon>
        <taxon>Rhodymeniophycidae</taxon>
        <taxon>Gracilariales</taxon>
        <taxon>Gracilariaceae</taxon>
        <taxon>Gracilaria</taxon>
        <taxon>Gracilaria tenuistipitata</taxon>
    </lineage>
</organism>
<evidence type="ECO:0000255" key="1">
    <source>
        <dbReference type="HAMAP-Rule" id="MF_01305"/>
    </source>
</evidence>
<reference key="1">
    <citation type="journal article" date="2004" name="J. Mol. Evol.">
        <title>Comparative analysis of the complete plastid genome sequence of the red alga Gracilaria tenuistipitata var. liui provides insights into the evolution of rhodoplasts and their relationship to other plastids.</title>
        <authorList>
            <person name="Hagopian J.C."/>
            <person name="Reis M."/>
            <person name="Kitajima J.P."/>
            <person name="Bhattacharya D."/>
            <person name="de Oliveira M.C."/>
        </authorList>
    </citation>
    <scope>NUCLEOTIDE SEQUENCE [LARGE SCALE GENOMIC DNA]</scope>
</reference>
<proteinExistence type="inferred from homology"/>
<keyword id="KW-0150">Chloroplast</keyword>
<keyword id="KW-0472">Membrane</keyword>
<keyword id="KW-0602">Photosynthesis</keyword>
<keyword id="KW-0604">Photosystem II</keyword>
<keyword id="KW-0934">Plastid</keyword>
<keyword id="KW-0674">Reaction center</keyword>
<keyword id="KW-0793">Thylakoid</keyword>
<keyword id="KW-0812">Transmembrane</keyword>
<keyword id="KW-1133">Transmembrane helix</keyword>
<gene>
    <name evidence="1" type="primary">psbJ</name>
    <name type="ordered locus">Grc000197</name>
</gene>